<keyword id="KW-0002">3D-structure</keyword>
<keyword id="KW-0217">Developmental protein</keyword>
<keyword id="KW-0227">DNA damage</keyword>
<keyword id="KW-0233">DNA recombination</keyword>
<keyword id="KW-0234">DNA repair</keyword>
<keyword id="KW-0238">DNA-binding</keyword>
<keyword id="KW-0479">Metal-binding</keyword>
<keyword id="KW-0539">Nucleus</keyword>
<keyword id="KW-1185">Reference proteome</keyword>
<keyword id="KW-0677">Repeat</keyword>
<keyword id="KW-0678">Repressor</keyword>
<keyword id="KW-0804">Transcription</keyword>
<keyword id="KW-0805">Transcription regulation</keyword>
<keyword id="KW-0862">Zinc</keyword>
<keyword id="KW-0863">Zinc-finger</keyword>
<organism>
    <name type="scientific">Drosophila melanogaster</name>
    <name type="common">Fruit fly</name>
    <dbReference type="NCBI Taxonomy" id="7227"/>
    <lineage>
        <taxon>Eukaryota</taxon>
        <taxon>Metazoa</taxon>
        <taxon>Ecdysozoa</taxon>
        <taxon>Arthropoda</taxon>
        <taxon>Hexapoda</taxon>
        <taxon>Insecta</taxon>
        <taxon>Pterygota</taxon>
        <taxon>Neoptera</taxon>
        <taxon>Endopterygota</taxon>
        <taxon>Diptera</taxon>
        <taxon>Brachycera</taxon>
        <taxon>Muscomorpha</taxon>
        <taxon>Ephydroidea</taxon>
        <taxon>Drosophilidae</taxon>
        <taxon>Drosophila</taxon>
        <taxon>Sophophora</taxon>
    </lineage>
</organism>
<evidence type="ECO:0000250" key="1"/>
<evidence type="ECO:0000255" key="2">
    <source>
        <dbReference type="PROSITE-ProRule" id="PRU00042"/>
    </source>
</evidence>
<evidence type="ECO:0000256" key="3">
    <source>
        <dbReference type="SAM" id="MobiDB-lite"/>
    </source>
</evidence>
<evidence type="ECO:0000269" key="4">
    <source>
    </source>
</evidence>
<evidence type="ECO:0000269" key="5">
    <source>
    </source>
</evidence>
<evidence type="ECO:0000269" key="6">
    <source>
    </source>
</evidence>
<evidence type="ECO:0000269" key="7">
    <source>
    </source>
</evidence>
<evidence type="ECO:0007829" key="8">
    <source>
        <dbReference type="PDB" id="4C5E"/>
    </source>
</evidence>
<accession>Q8ST83</accession>
<accession>A4V138</accession>
<accession>O76247</accession>
<accession>Q6W466</accession>
<accession>Q6W467</accession>
<accession>Q6W470</accession>
<accession>Q6W480</accession>
<accession>Q6W485</accession>
<accession>Q9V4A3</accession>
<reference key="1">
    <citation type="journal article" date="1998" name="Mol. Cell">
        <title>The Drosophila Polycomb group gene pleiohomeotic encodes a DNA binding protein with homology to the transcription factor YY1.</title>
        <authorList>
            <person name="Brown J.L."/>
            <person name="Mucci D."/>
            <person name="Whiteley M."/>
            <person name="Dirksen M.-L."/>
            <person name="Kassis J.A."/>
        </authorList>
    </citation>
    <scope>NUCLEOTIDE SEQUENCE [MRNA]</scope>
    <scope>FUNCTION</scope>
    <scope>DNA-BINDING ACTIVITY</scope>
    <source>
        <tissue>Embryo</tissue>
    </source>
</reference>
<reference key="2">
    <citation type="journal article" date="2000" name="Science">
        <title>The genome sequence of Drosophila melanogaster.</title>
        <authorList>
            <person name="Adams M.D."/>
            <person name="Celniker S.E."/>
            <person name="Holt R.A."/>
            <person name="Evans C.A."/>
            <person name="Gocayne J.D."/>
            <person name="Amanatides P.G."/>
            <person name="Scherer S.E."/>
            <person name="Li P.W."/>
            <person name="Hoskins R.A."/>
            <person name="Galle R.F."/>
            <person name="George R.A."/>
            <person name="Lewis S.E."/>
            <person name="Richards S."/>
            <person name="Ashburner M."/>
            <person name="Henderson S.N."/>
            <person name="Sutton G.G."/>
            <person name="Wortman J.R."/>
            <person name="Yandell M.D."/>
            <person name="Zhang Q."/>
            <person name="Chen L.X."/>
            <person name="Brandon R.C."/>
            <person name="Rogers Y.-H.C."/>
            <person name="Blazej R.G."/>
            <person name="Champe M."/>
            <person name="Pfeiffer B.D."/>
            <person name="Wan K.H."/>
            <person name="Doyle C."/>
            <person name="Baxter E.G."/>
            <person name="Helt G."/>
            <person name="Nelson C.R."/>
            <person name="Miklos G.L.G."/>
            <person name="Abril J.F."/>
            <person name="Agbayani A."/>
            <person name="An H.-J."/>
            <person name="Andrews-Pfannkoch C."/>
            <person name="Baldwin D."/>
            <person name="Ballew R.M."/>
            <person name="Basu A."/>
            <person name="Baxendale J."/>
            <person name="Bayraktaroglu L."/>
            <person name="Beasley E.M."/>
            <person name="Beeson K.Y."/>
            <person name="Benos P.V."/>
            <person name="Berman B.P."/>
            <person name="Bhandari D."/>
            <person name="Bolshakov S."/>
            <person name="Borkova D."/>
            <person name="Botchan M.R."/>
            <person name="Bouck J."/>
            <person name="Brokstein P."/>
            <person name="Brottier P."/>
            <person name="Burtis K.C."/>
            <person name="Busam D.A."/>
            <person name="Butler H."/>
            <person name="Cadieu E."/>
            <person name="Center A."/>
            <person name="Chandra I."/>
            <person name="Cherry J.M."/>
            <person name="Cawley S."/>
            <person name="Dahlke C."/>
            <person name="Davenport L.B."/>
            <person name="Davies P."/>
            <person name="de Pablos B."/>
            <person name="Delcher A."/>
            <person name="Deng Z."/>
            <person name="Mays A.D."/>
            <person name="Dew I."/>
            <person name="Dietz S.M."/>
            <person name="Dodson K."/>
            <person name="Doup L.E."/>
            <person name="Downes M."/>
            <person name="Dugan-Rocha S."/>
            <person name="Dunkov B.C."/>
            <person name="Dunn P."/>
            <person name="Durbin K.J."/>
            <person name="Evangelista C.C."/>
            <person name="Ferraz C."/>
            <person name="Ferriera S."/>
            <person name="Fleischmann W."/>
            <person name="Fosler C."/>
            <person name="Gabrielian A.E."/>
            <person name="Garg N.S."/>
            <person name="Gelbart W.M."/>
            <person name="Glasser K."/>
            <person name="Glodek A."/>
            <person name="Gong F."/>
            <person name="Gorrell J.H."/>
            <person name="Gu Z."/>
            <person name="Guan P."/>
            <person name="Harris M."/>
            <person name="Harris N.L."/>
            <person name="Harvey D.A."/>
            <person name="Heiman T.J."/>
            <person name="Hernandez J.R."/>
            <person name="Houck J."/>
            <person name="Hostin D."/>
            <person name="Houston K.A."/>
            <person name="Howland T.J."/>
            <person name="Wei M.-H."/>
            <person name="Ibegwam C."/>
            <person name="Jalali M."/>
            <person name="Kalush F."/>
            <person name="Karpen G.H."/>
            <person name="Ke Z."/>
            <person name="Kennison J.A."/>
            <person name="Ketchum K.A."/>
            <person name="Kimmel B.E."/>
            <person name="Kodira C.D."/>
            <person name="Kraft C.L."/>
            <person name="Kravitz S."/>
            <person name="Kulp D."/>
            <person name="Lai Z."/>
            <person name="Lasko P."/>
            <person name="Lei Y."/>
            <person name="Levitsky A.A."/>
            <person name="Li J.H."/>
            <person name="Li Z."/>
            <person name="Liang Y."/>
            <person name="Lin X."/>
            <person name="Liu X."/>
            <person name="Mattei B."/>
            <person name="McIntosh T.C."/>
            <person name="McLeod M.P."/>
            <person name="McPherson D."/>
            <person name="Merkulov G."/>
            <person name="Milshina N.V."/>
            <person name="Mobarry C."/>
            <person name="Morris J."/>
            <person name="Moshrefi A."/>
            <person name="Mount S.M."/>
            <person name="Moy M."/>
            <person name="Murphy B."/>
            <person name="Murphy L."/>
            <person name="Muzny D.M."/>
            <person name="Nelson D.L."/>
            <person name="Nelson D.R."/>
            <person name="Nelson K.A."/>
            <person name="Nixon K."/>
            <person name="Nusskern D.R."/>
            <person name="Pacleb J.M."/>
            <person name="Palazzolo M."/>
            <person name="Pittman G.S."/>
            <person name="Pan S."/>
            <person name="Pollard J."/>
            <person name="Puri V."/>
            <person name="Reese M.G."/>
            <person name="Reinert K."/>
            <person name="Remington K."/>
            <person name="Saunders R.D.C."/>
            <person name="Scheeler F."/>
            <person name="Shen H."/>
            <person name="Shue B.C."/>
            <person name="Siden-Kiamos I."/>
            <person name="Simpson M."/>
            <person name="Skupski M.P."/>
            <person name="Smith T.J."/>
            <person name="Spier E."/>
            <person name="Spradling A.C."/>
            <person name="Stapleton M."/>
            <person name="Strong R."/>
            <person name="Sun E."/>
            <person name="Svirskas R."/>
            <person name="Tector C."/>
            <person name="Turner R."/>
            <person name="Venter E."/>
            <person name="Wang A.H."/>
            <person name="Wang X."/>
            <person name="Wang Z.-Y."/>
            <person name="Wassarman D.A."/>
            <person name="Weinstock G.M."/>
            <person name="Weissenbach J."/>
            <person name="Williams S.M."/>
            <person name="Woodage T."/>
            <person name="Worley K.C."/>
            <person name="Wu D."/>
            <person name="Yang S."/>
            <person name="Yao Q.A."/>
            <person name="Ye J."/>
            <person name="Yeh R.-F."/>
            <person name="Zaveri J.S."/>
            <person name="Zhan M."/>
            <person name="Zhang G."/>
            <person name="Zhao Q."/>
            <person name="Zheng L."/>
            <person name="Zheng X.H."/>
            <person name="Zhong F.N."/>
            <person name="Zhong W."/>
            <person name="Zhou X."/>
            <person name="Zhu S.C."/>
            <person name="Zhu X."/>
            <person name="Smith H.O."/>
            <person name="Gibbs R.A."/>
            <person name="Myers E.W."/>
            <person name="Rubin G.M."/>
            <person name="Venter J.C."/>
        </authorList>
    </citation>
    <scope>NUCLEOTIDE SEQUENCE [LARGE SCALE GENOMIC DNA]</scope>
    <source>
        <strain>Berkeley</strain>
    </source>
</reference>
<reference key="3">
    <citation type="journal article" date="2002" name="Genome Biol.">
        <title>Annotation of the Drosophila melanogaster euchromatic genome: a systematic review.</title>
        <authorList>
            <person name="Misra S."/>
            <person name="Crosby M.A."/>
            <person name="Mungall C.J."/>
            <person name="Matthews B.B."/>
            <person name="Campbell K.S."/>
            <person name="Hradecky P."/>
            <person name="Huang Y."/>
            <person name="Kaminker J.S."/>
            <person name="Millburn G.H."/>
            <person name="Prochnik S.E."/>
            <person name="Smith C.D."/>
            <person name="Tupy J.L."/>
            <person name="Whitfield E.J."/>
            <person name="Bayraktaroglu L."/>
            <person name="Berman B.P."/>
            <person name="Bettencourt B.R."/>
            <person name="Celniker S.E."/>
            <person name="de Grey A.D.N.J."/>
            <person name="Drysdale R.A."/>
            <person name="Harris N.L."/>
            <person name="Richter J."/>
            <person name="Russo S."/>
            <person name="Schroeder A.J."/>
            <person name="Shu S.Q."/>
            <person name="Stapleton M."/>
            <person name="Yamada C."/>
            <person name="Ashburner M."/>
            <person name="Gelbart W.M."/>
            <person name="Rubin G.M."/>
            <person name="Lewis S.E."/>
        </authorList>
    </citation>
    <scope>GENOME REANNOTATION</scope>
    <source>
        <strain>Berkeley</strain>
    </source>
</reference>
<reference key="4">
    <citation type="journal article" date="2002" name="Genome Biol.">
        <title>A Drosophila full-length cDNA resource.</title>
        <authorList>
            <person name="Stapleton M."/>
            <person name="Carlson J.W."/>
            <person name="Brokstein P."/>
            <person name="Yu C."/>
            <person name="Champe M."/>
            <person name="George R.A."/>
            <person name="Guarin H."/>
            <person name="Kronmiller B."/>
            <person name="Pacleb J.M."/>
            <person name="Park S."/>
            <person name="Wan K.H."/>
            <person name="Rubin G.M."/>
            <person name="Celniker S.E."/>
        </authorList>
    </citation>
    <scope>NUCLEOTIDE SEQUENCE [LARGE SCALE MRNA]</scope>
    <source>
        <strain>Berkeley</strain>
        <tissue>Embryo</tissue>
    </source>
</reference>
<reference key="5">
    <citation type="journal article" date="2002" name="Science">
        <title>Nucleotide variation along the Drosophila melanogaster fourth chromosome.</title>
        <authorList>
            <person name="Wang W."/>
            <person name="Thornton K."/>
            <person name="Berry A."/>
            <person name="Long M."/>
        </authorList>
    </citation>
    <scope>NUCLEOTIDE SEQUENCE [GENOMIC DNA] OF 48-373</scope>
    <source>
        <strain>253.27</strain>
        <strain>253.30</strain>
        <strain>Closs10</strain>
        <strain>Closs19</strain>
        <strain>North7.13</strain>
        <strain>Rio</strain>
        <strain>South1.10</strain>
        <strain>Y10</strain>
        <strain>ZH56</strain>
        <strain>ZW30</strain>
    </source>
</reference>
<reference key="6">
    <citation type="journal article" date="2003" name="Genetics">
        <title>Recombination, dominance and selection on amino acid polymorphism in the Drosophila genome: contrasting patterns on the X and fourth chromosomes.</title>
        <authorList>
            <person name="Sheldahl L.A."/>
            <person name="Weinreich D.M."/>
            <person name="Rand D.M."/>
        </authorList>
    </citation>
    <scope>NUCLEOTIDE SEQUENCE [GENOMIC DNA] OF 79-334</scope>
    <source>
        <strain>Crete24</strain>
        <strain>Crete26</strain>
        <strain>Crete30</strain>
        <strain>Crete31</strain>
        <strain>Crete35</strain>
        <strain>Crete40</strain>
        <strain>Crete42</strain>
        <strain>Crete43</strain>
        <strain>Crete44</strain>
        <strain>Crete8</strain>
        <strain>FTF1</strain>
        <strain>FTF105</strain>
        <strain>FTF14</strain>
        <strain>FTF2</strain>
        <strain>FTF20</strain>
        <strain>FTF23</strain>
        <strain>FTF26</strain>
        <strain>FTF28</strain>
        <strain>FTF5</strain>
        <strain>FTF6</strain>
        <strain>Zim11</strain>
        <strain>Zim2</strain>
        <strain>Zim30</strain>
        <strain>Zim53</strain>
    </source>
</reference>
<reference key="7">
    <citation type="journal article" date="1999" name="Development">
        <title>The DNA-binding Polycomb group protein pleiohomeotic mediates silencing of a Drosophila homeotic gene.</title>
        <authorList>
            <person name="Fritsch C."/>
            <person name="Brown J.L."/>
            <person name="Kassis J.A."/>
            <person name="Mueller J."/>
        </authorList>
    </citation>
    <scope>FUNCTION</scope>
</reference>
<reference key="8">
    <citation type="journal article" date="2001" name="Development">
        <title>Recruitment of components of Polycomb group chromatin complexes in Drosophila.</title>
        <authorList>
            <person name="Poux S."/>
            <person name="McCabe D."/>
            <person name="Pirrotta V."/>
        </authorList>
    </citation>
    <scope>LACK OF INTERACTION WITH THE PRC1 POLYCOMB COMPLEX</scope>
</reference>
<reference key="9">
    <citation type="journal article" date="2001" name="Genes Dev.">
        <title>Establishment of Polycomb silencing requires a transient interaction between PC and ESC.</title>
        <authorList>
            <person name="Poux S."/>
            <person name="Melfi R."/>
            <person name="Pirrotta V."/>
        </authorList>
    </citation>
    <scope>IDENTIFICATION IN A COMPLEX WITH HDAC1; ESC AND E(Z)</scope>
    <scope>TRANSIENT INTERACTION WITH THE PRC1 COMPLEX</scope>
</reference>
<reference key="10">
    <citation type="journal article" date="2006" name="Genes Dev.">
        <title>A Polycomb group protein complex with sequence-specific DNA-binding and selective methyl-lysine-binding activities.</title>
        <authorList>
            <person name="Klymenko T."/>
            <person name="Papp B."/>
            <person name="Fischle W."/>
            <person name="Koecher T."/>
            <person name="Schelder M."/>
            <person name="Fritsch C."/>
            <person name="Wild B."/>
            <person name="Wilm M."/>
            <person name="Mueller J."/>
        </authorList>
    </citation>
    <scope>DNA-BINDING ACTIVITY</scope>
    <scope>SUBCELLULAR LOCATION</scope>
    <scope>IDENTIFICATION IN THE INO80 COMPLEX</scope>
    <scope>INTERACTION WITH SFMBT</scope>
    <source>
        <tissue>Embryo</tissue>
    </source>
</reference>
<sequence length="520" mass="58224">MAYERFGIILQSEQYDEDIGNTKVNQKMNEGNHYDLHRKNAFDRIIHSESKKGDNVINYNIHENDKIKAADNIFSSKLKMNPNMSYEMNINCFKNIGYGENQETSKVLTNSLSNNDINTEESGVVDKNSPFLTLGTTILNSNGKSRRWEQKLVHIKTMEGEFSVTMWASGISDDEYSGSDQIVGASDLLKGKEEFGIDGFTSQQNKEYQKMESKFTNAQTLEMPHPISSVQIMDHLIKERGNLSQENNISERILSKTTLSFEEPILLPDSSSIELVNETAAMTINNHRTLSNHTGNTGDLHALPSSVPFRIGLHEGQVNDCLSTISQSTHQDNTDSTGCGEMNLSEVTVSYTNDKKIACPHKGCNKHFRDSSAMRKHLHTHGPRVHVCAECGKAFVESSKLKRHQLVHTGEKPFQCTFEGCGKRFSLDFNLRTHVRIHTGDRPFVCPFDACNKKFAQSTNLKSHILTHAKAKRNTSISGKSGCSNAESNSQSEDTSANYVKVELQDSVTENHVPFVVYAD</sequence>
<dbReference type="EMBL" id="AF034212">
    <property type="protein sequence ID" value="AAC39123.1"/>
    <property type="molecule type" value="mRNA"/>
</dbReference>
<dbReference type="EMBL" id="AE014135">
    <property type="protein sequence ID" value="AAF59378.2"/>
    <property type="molecule type" value="Genomic_DNA"/>
</dbReference>
<dbReference type="EMBL" id="AE014135">
    <property type="protein sequence ID" value="AAN06584.1"/>
    <property type="molecule type" value="Genomic_DNA"/>
</dbReference>
<dbReference type="EMBL" id="AY071143">
    <property type="protein sequence ID" value="AAL48765.1"/>
    <property type="molecule type" value="mRNA"/>
</dbReference>
<dbReference type="EMBL" id="AF433865">
    <property type="protein sequence ID" value="AAM18016.1"/>
    <property type="molecule type" value="Genomic_DNA"/>
</dbReference>
<dbReference type="EMBL" id="AF433866">
    <property type="protein sequence ID" value="AAM18017.1"/>
    <property type="molecule type" value="Genomic_DNA"/>
</dbReference>
<dbReference type="EMBL" id="AF433867">
    <property type="protein sequence ID" value="AAM18018.1"/>
    <property type="molecule type" value="Genomic_DNA"/>
</dbReference>
<dbReference type="EMBL" id="AF433868">
    <property type="protein sequence ID" value="AAM18019.1"/>
    <property type="molecule type" value="Genomic_DNA"/>
</dbReference>
<dbReference type="EMBL" id="AF433869">
    <property type="protein sequence ID" value="AAM18020.1"/>
    <property type="molecule type" value="Genomic_DNA"/>
</dbReference>
<dbReference type="EMBL" id="AF433870">
    <property type="protein sequence ID" value="AAM18021.1"/>
    <property type="molecule type" value="Genomic_DNA"/>
</dbReference>
<dbReference type="EMBL" id="AF433871">
    <property type="protein sequence ID" value="AAM18022.1"/>
    <property type="molecule type" value="Genomic_DNA"/>
</dbReference>
<dbReference type="EMBL" id="AF433872">
    <property type="protein sequence ID" value="AAM18023.1"/>
    <property type="molecule type" value="Genomic_DNA"/>
</dbReference>
<dbReference type="EMBL" id="AF433873">
    <property type="protein sequence ID" value="AAM18024.1"/>
    <property type="molecule type" value="Genomic_DNA"/>
</dbReference>
<dbReference type="EMBL" id="AF433874">
    <property type="protein sequence ID" value="AAM18025.1"/>
    <property type="molecule type" value="Genomic_DNA"/>
</dbReference>
<dbReference type="EMBL" id="AY312758">
    <property type="protein sequence ID" value="AAQ67572.1"/>
    <property type="molecule type" value="Genomic_DNA"/>
</dbReference>
<dbReference type="EMBL" id="AY312759">
    <property type="protein sequence ID" value="AAQ67573.1"/>
    <property type="molecule type" value="Genomic_DNA"/>
</dbReference>
<dbReference type="EMBL" id="AY312760">
    <property type="protein sequence ID" value="AAQ67574.1"/>
    <property type="molecule type" value="Genomic_DNA"/>
</dbReference>
<dbReference type="EMBL" id="AY312761">
    <property type="protein sequence ID" value="AAQ67575.1"/>
    <property type="molecule type" value="Genomic_DNA"/>
</dbReference>
<dbReference type="EMBL" id="AY312762">
    <property type="protein sequence ID" value="AAQ67576.1"/>
    <property type="molecule type" value="Genomic_DNA"/>
</dbReference>
<dbReference type="EMBL" id="AY312763">
    <property type="protein sequence ID" value="AAQ67577.1"/>
    <property type="molecule type" value="Genomic_DNA"/>
</dbReference>
<dbReference type="EMBL" id="AY312764">
    <property type="protein sequence ID" value="AAQ67578.1"/>
    <property type="molecule type" value="Genomic_DNA"/>
</dbReference>
<dbReference type="EMBL" id="AY312765">
    <property type="protein sequence ID" value="AAQ67579.1"/>
    <property type="molecule type" value="Genomic_DNA"/>
</dbReference>
<dbReference type="EMBL" id="AY312766">
    <property type="protein sequence ID" value="AAQ67580.1"/>
    <property type="molecule type" value="Genomic_DNA"/>
</dbReference>
<dbReference type="EMBL" id="AY312767">
    <property type="protein sequence ID" value="AAQ67581.1"/>
    <property type="molecule type" value="Genomic_DNA"/>
</dbReference>
<dbReference type="EMBL" id="AY312768">
    <property type="protein sequence ID" value="AAQ67582.1"/>
    <property type="molecule type" value="Genomic_DNA"/>
</dbReference>
<dbReference type="EMBL" id="AY312769">
    <property type="protein sequence ID" value="AAQ67583.1"/>
    <property type="molecule type" value="Genomic_DNA"/>
</dbReference>
<dbReference type="EMBL" id="AY312770">
    <property type="protein sequence ID" value="AAQ67584.1"/>
    <property type="molecule type" value="Genomic_DNA"/>
</dbReference>
<dbReference type="EMBL" id="AY312771">
    <property type="protein sequence ID" value="AAQ67585.1"/>
    <property type="molecule type" value="Genomic_DNA"/>
</dbReference>
<dbReference type="EMBL" id="AY312772">
    <property type="protein sequence ID" value="AAQ67586.1"/>
    <property type="molecule type" value="Genomic_DNA"/>
</dbReference>
<dbReference type="EMBL" id="AY312773">
    <property type="protein sequence ID" value="AAQ67587.1"/>
    <property type="molecule type" value="Genomic_DNA"/>
</dbReference>
<dbReference type="EMBL" id="AY312774">
    <property type="protein sequence ID" value="AAQ67588.1"/>
    <property type="molecule type" value="Genomic_DNA"/>
</dbReference>
<dbReference type="EMBL" id="AY312775">
    <property type="protein sequence ID" value="AAQ67589.1"/>
    <property type="molecule type" value="Genomic_DNA"/>
</dbReference>
<dbReference type="EMBL" id="AY312776">
    <property type="protein sequence ID" value="AAQ67590.1"/>
    <property type="molecule type" value="Genomic_DNA"/>
</dbReference>
<dbReference type="EMBL" id="AY312777">
    <property type="protein sequence ID" value="AAQ67591.1"/>
    <property type="molecule type" value="Genomic_DNA"/>
</dbReference>
<dbReference type="EMBL" id="AY312778">
    <property type="protein sequence ID" value="AAQ67592.1"/>
    <property type="molecule type" value="Genomic_DNA"/>
</dbReference>
<dbReference type="EMBL" id="AY312779">
    <property type="protein sequence ID" value="AAQ67593.1"/>
    <property type="molecule type" value="Genomic_DNA"/>
</dbReference>
<dbReference type="EMBL" id="AY312780">
    <property type="protein sequence ID" value="AAQ67594.1"/>
    <property type="molecule type" value="Genomic_DNA"/>
</dbReference>
<dbReference type="EMBL" id="AY312781">
    <property type="protein sequence ID" value="AAQ67595.1"/>
    <property type="molecule type" value="Genomic_DNA"/>
</dbReference>
<dbReference type="RefSeq" id="NP_524630.1">
    <property type="nucleotide sequence ID" value="NM_079891.3"/>
</dbReference>
<dbReference type="RefSeq" id="NP_726651.1">
    <property type="nucleotide sequence ID" value="NM_166827.2"/>
</dbReference>
<dbReference type="PDB" id="4C5E">
    <property type="method" value="X-ray"/>
    <property type="resolution" value="1.95 A"/>
    <property type="chains" value="E/F/G/H=145-172"/>
</dbReference>
<dbReference type="PDB" id="4C5G">
    <property type="method" value="X-ray"/>
    <property type="resolution" value="2.10 A"/>
    <property type="chains" value="B=145-172"/>
</dbReference>
<dbReference type="PDB" id="4C5H">
    <property type="method" value="X-ray"/>
    <property type="resolution" value="3.20 A"/>
    <property type="chains" value="B=116-246"/>
</dbReference>
<dbReference type="PDBsum" id="4C5E"/>
<dbReference type="PDBsum" id="4C5G"/>
<dbReference type="PDBsum" id="4C5H"/>
<dbReference type="SMR" id="Q8ST83"/>
<dbReference type="BioGRID" id="68646">
    <property type="interactions" value="38"/>
</dbReference>
<dbReference type="ComplexPortal" id="CPX-2693">
    <property type="entry name" value="INO80 chromatin remodeling complex"/>
</dbReference>
<dbReference type="ComplexPortal" id="CPX-7941">
    <property type="entry name" value="PHO transcriptional repressor complex, PHO variant"/>
</dbReference>
<dbReference type="DIP" id="DIP-20923N"/>
<dbReference type="FunCoup" id="Q8ST83">
    <property type="interactions" value="56"/>
</dbReference>
<dbReference type="IntAct" id="Q8ST83">
    <property type="interactions" value="19"/>
</dbReference>
<dbReference type="MINT" id="Q8ST83"/>
<dbReference type="STRING" id="7227.FBpp0088268"/>
<dbReference type="GlyGen" id="Q8ST83">
    <property type="glycosylation" value="1 site, 1 O-linked glycan (1 site)"/>
</dbReference>
<dbReference type="PaxDb" id="7227-FBpp0088268"/>
<dbReference type="DNASU" id="43819"/>
<dbReference type="EnsemblMetazoa" id="FBtr0089204">
    <property type="protein sequence ID" value="FBpp0088268"/>
    <property type="gene ID" value="FBgn0002521"/>
</dbReference>
<dbReference type="EnsemblMetazoa" id="FBtr0089205">
    <property type="protein sequence ID" value="FBpp0088269"/>
    <property type="gene ID" value="FBgn0002521"/>
</dbReference>
<dbReference type="GeneID" id="43819"/>
<dbReference type="KEGG" id="dme:Dmel_CG17743"/>
<dbReference type="UCSC" id="CG17743-RA">
    <property type="organism name" value="d. melanogaster"/>
</dbReference>
<dbReference type="AGR" id="FB:FBgn0002521"/>
<dbReference type="CTD" id="334003"/>
<dbReference type="FlyBase" id="FBgn0002521">
    <property type="gene designation" value="pho"/>
</dbReference>
<dbReference type="VEuPathDB" id="VectorBase:FBgn0002521"/>
<dbReference type="eggNOG" id="KOG1721">
    <property type="taxonomic scope" value="Eukaryota"/>
</dbReference>
<dbReference type="GeneTree" id="ENSGT00940000154763"/>
<dbReference type="HOGENOM" id="CLU_039881_0_0_1"/>
<dbReference type="InParanoid" id="Q8ST83"/>
<dbReference type="OMA" id="GYEMNIN"/>
<dbReference type="OrthoDB" id="10264072at2759"/>
<dbReference type="PhylomeDB" id="Q8ST83"/>
<dbReference type="Reactome" id="R-DME-5689603">
    <property type="pathway name" value="UCH proteinases"/>
</dbReference>
<dbReference type="Reactome" id="R-DME-5696394">
    <property type="pathway name" value="DNA Damage Recognition in GG-NER"/>
</dbReference>
<dbReference type="Reactome" id="R-DME-9018519">
    <property type="pathway name" value="Estrogen-dependent gene expression"/>
</dbReference>
<dbReference type="SignaLink" id="Q8ST83"/>
<dbReference type="BioGRID-ORCS" id="43819">
    <property type="hits" value="0 hits in 3 CRISPR screens"/>
</dbReference>
<dbReference type="CD-CODE" id="58FDC23F">
    <property type="entry name" value="PcG body"/>
</dbReference>
<dbReference type="EvolutionaryTrace" id="Q8ST83"/>
<dbReference type="GenomeRNAi" id="43819"/>
<dbReference type="PRO" id="PR:Q8ST83"/>
<dbReference type="Proteomes" id="UP000000803">
    <property type="component" value="Chromosome 4"/>
</dbReference>
<dbReference type="Bgee" id="FBgn0002521">
    <property type="expression patterns" value="Expressed in cleaving embryo and 261 other cell types or tissues"/>
</dbReference>
<dbReference type="GO" id="GO:0000785">
    <property type="term" value="C:chromatin"/>
    <property type="evidence" value="ECO:0000314"/>
    <property type="project" value="UniProtKB"/>
</dbReference>
<dbReference type="GO" id="GO:0031011">
    <property type="term" value="C:Ino80 complex"/>
    <property type="evidence" value="ECO:0000314"/>
    <property type="project" value="FlyBase"/>
</dbReference>
<dbReference type="GO" id="GO:0005634">
    <property type="term" value="C:nucleus"/>
    <property type="evidence" value="ECO:0000314"/>
    <property type="project" value="FlyBase"/>
</dbReference>
<dbReference type="GO" id="GO:0031519">
    <property type="term" value="C:PcG protein complex"/>
    <property type="evidence" value="ECO:0000314"/>
    <property type="project" value="FlyBase"/>
</dbReference>
<dbReference type="GO" id="GO:0005700">
    <property type="term" value="C:polytene chromosome"/>
    <property type="evidence" value="ECO:0000314"/>
    <property type="project" value="FlyBase"/>
</dbReference>
<dbReference type="GO" id="GO:0005703">
    <property type="term" value="C:polytene chromosome puff"/>
    <property type="evidence" value="ECO:0000314"/>
    <property type="project" value="FlyBase"/>
</dbReference>
<dbReference type="GO" id="GO:0005667">
    <property type="term" value="C:transcription regulator complex"/>
    <property type="evidence" value="ECO:0000318"/>
    <property type="project" value="GO_Central"/>
</dbReference>
<dbReference type="GO" id="GO:0003682">
    <property type="term" value="F:chromatin binding"/>
    <property type="evidence" value="ECO:0000314"/>
    <property type="project" value="FlyBase"/>
</dbReference>
<dbReference type="GO" id="GO:0031490">
    <property type="term" value="F:chromatin DNA binding"/>
    <property type="evidence" value="ECO:0000314"/>
    <property type="project" value="FlyBase"/>
</dbReference>
<dbReference type="GO" id="GO:0003677">
    <property type="term" value="F:DNA binding"/>
    <property type="evidence" value="ECO:0000314"/>
    <property type="project" value="UniProtKB"/>
</dbReference>
<dbReference type="GO" id="GO:0000981">
    <property type="term" value="F:DNA-binding transcription factor activity, RNA polymerase II-specific"/>
    <property type="evidence" value="ECO:0000318"/>
    <property type="project" value="GO_Central"/>
</dbReference>
<dbReference type="GO" id="GO:0000978">
    <property type="term" value="F:RNA polymerase II cis-regulatory region sequence-specific DNA binding"/>
    <property type="evidence" value="ECO:0000314"/>
    <property type="project" value="FlyBase"/>
</dbReference>
<dbReference type="GO" id="GO:0043565">
    <property type="term" value="F:sequence-specific DNA binding"/>
    <property type="evidence" value="ECO:0000314"/>
    <property type="project" value="FlyBase"/>
</dbReference>
<dbReference type="GO" id="GO:0008270">
    <property type="term" value="F:zinc ion binding"/>
    <property type="evidence" value="ECO:0007669"/>
    <property type="project" value="UniProtKB-KW"/>
</dbReference>
<dbReference type="GO" id="GO:0009948">
    <property type="term" value="P:anterior/posterior axis specification"/>
    <property type="evidence" value="ECO:0000315"/>
    <property type="project" value="UniProtKB"/>
</dbReference>
<dbReference type="GO" id="GO:0006338">
    <property type="term" value="P:chromatin remodeling"/>
    <property type="evidence" value="ECO:0000305"/>
    <property type="project" value="FlyBase"/>
</dbReference>
<dbReference type="GO" id="GO:0048813">
    <property type="term" value="P:dendrite morphogenesis"/>
    <property type="evidence" value="ECO:0000315"/>
    <property type="project" value="FlyBase"/>
</dbReference>
<dbReference type="GO" id="GO:0006310">
    <property type="term" value="P:DNA recombination"/>
    <property type="evidence" value="ECO:0007669"/>
    <property type="project" value="UniProtKB-KW"/>
</dbReference>
<dbReference type="GO" id="GO:0006281">
    <property type="term" value="P:DNA repair"/>
    <property type="evidence" value="ECO:0007669"/>
    <property type="project" value="UniProtKB-KW"/>
</dbReference>
<dbReference type="GO" id="GO:0006265">
    <property type="term" value="P:DNA topological change"/>
    <property type="evidence" value="ECO:0000314"/>
    <property type="project" value="FlyBase"/>
</dbReference>
<dbReference type="GO" id="GO:0031507">
    <property type="term" value="P:heterochromatin formation"/>
    <property type="evidence" value="ECO:0000314"/>
    <property type="project" value="FlyBase"/>
</dbReference>
<dbReference type="GO" id="GO:0045892">
    <property type="term" value="P:negative regulation of DNA-templated transcription"/>
    <property type="evidence" value="ECO:0000314"/>
    <property type="project" value="FlyBase"/>
</dbReference>
<dbReference type="GO" id="GO:0010629">
    <property type="term" value="P:negative regulation of gene expression"/>
    <property type="evidence" value="ECO:0000315"/>
    <property type="project" value="FlyBase"/>
</dbReference>
<dbReference type="GO" id="GO:0006355">
    <property type="term" value="P:regulation of DNA-templated transcription"/>
    <property type="evidence" value="ECO:0000315"/>
    <property type="project" value="FlyBase"/>
</dbReference>
<dbReference type="GO" id="GO:0006357">
    <property type="term" value="P:regulation of transcription by RNA polymerase II"/>
    <property type="evidence" value="ECO:0000315"/>
    <property type="project" value="UniProtKB"/>
</dbReference>
<dbReference type="GO" id="GO:0045815">
    <property type="term" value="P:transcription initiation-coupled chromatin remodeling"/>
    <property type="evidence" value="ECO:0000314"/>
    <property type="project" value="UniProtKB"/>
</dbReference>
<dbReference type="DisProt" id="DP02718"/>
<dbReference type="FunFam" id="3.30.160.60:FF:000104">
    <property type="entry name" value="Transcriptional repressor protein YY1"/>
    <property type="match status" value="1"/>
</dbReference>
<dbReference type="FunFam" id="3.30.160.60:FF:000109">
    <property type="entry name" value="Transcriptional repressor protein YY1"/>
    <property type="match status" value="1"/>
</dbReference>
<dbReference type="FunFam" id="3.30.160.60:FF:000163">
    <property type="entry name" value="transcriptional repressor protein YY1"/>
    <property type="match status" value="1"/>
</dbReference>
<dbReference type="Gene3D" id="3.30.160.60">
    <property type="entry name" value="Classic Zinc Finger"/>
    <property type="match status" value="4"/>
</dbReference>
<dbReference type="InterPro" id="IPR036236">
    <property type="entry name" value="Znf_C2H2_sf"/>
</dbReference>
<dbReference type="InterPro" id="IPR013087">
    <property type="entry name" value="Znf_C2H2_type"/>
</dbReference>
<dbReference type="PANTHER" id="PTHR14003">
    <property type="entry name" value="TRANSCRIPTIONAL REPRESSOR PROTEIN YY"/>
    <property type="match status" value="1"/>
</dbReference>
<dbReference type="PANTHER" id="PTHR14003:SF19">
    <property type="entry name" value="YY2 TRANSCRIPTION FACTOR"/>
    <property type="match status" value="1"/>
</dbReference>
<dbReference type="Pfam" id="PF00096">
    <property type="entry name" value="zf-C2H2"/>
    <property type="match status" value="3"/>
</dbReference>
<dbReference type="SMART" id="SM00355">
    <property type="entry name" value="ZnF_C2H2"/>
    <property type="match status" value="4"/>
</dbReference>
<dbReference type="SUPFAM" id="SSF57667">
    <property type="entry name" value="beta-beta-alpha zinc fingers"/>
    <property type="match status" value="3"/>
</dbReference>
<dbReference type="PROSITE" id="PS00028">
    <property type="entry name" value="ZINC_FINGER_C2H2_1"/>
    <property type="match status" value="4"/>
</dbReference>
<dbReference type="PROSITE" id="PS50157">
    <property type="entry name" value="ZINC_FINGER_C2H2_2"/>
    <property type="match status" value="4"/>
</dbReference>
<name>PHO_DROME</name>
<feature type="chain" id="PRO_0000047017" description="Polycomb protein PHO">
    <location>
        <begin position="1"/>
        <end position="520"/>
    </location>
</feature>
<feature type="zinc finger region" description="C2H2-type 1" evidence="2">
    <location>
        <begin position="357"/>
        <end position="381"/>
    </location>
</feature>
<feature type="zinc finger region" description="C2H2-type 2" evidence="2">
    <location>
        <begin position="386"/>
        <end position="408"/>
    </location>
</feature>
<feature type="zinc finger region" description="C2H2-type 3" evidence="2">
    <location>
        <begin position="414"/>
        <end position="438"/>
    </location>
</feature>
<feature type="zinc finger region" description="C2H2-type 4" evidence="2">
    <location>
        <begin position="444"/>
        <end position="468"/>
    </location>
</feature>
<feature type="region of interest" description="Disordered" evidence="3">
    <location>
        <begin position="475"/>
        <end position="497"/>
    </location>
</feature>
<feature type="strand" evidence="8">
    <location>
        <begin position="147"/>
        <end position="157"/>
    </location>
</feature>
<feature type="strand" evidence="8">
    <location>
        <begin position="160"/>
        <end position="169"/>
    </location>
</feature>
<protein>
    <recommendedName>
        <fullName>Polycomb protein PHO</fullName>
    </recommendedName>
    <alternativeName>
        <fullName>Protein pleiohomeotic</fullName>
    </alternativeName>
    <alternativeName>
        <fullName>Transcription factor YY1 homolog</fullName>
    </alternativeName>
</protein>
<proteinExistence type="evidence at protein level"/>
<comment type="function">
    <text evidence="4 7">Polycomb group (PcG) protein that binds to the 5'-CNGCCATNNNNG-3' sequence found in the regulatory regions of many genes. PcG proteins act by forming multiprotein complexes, which are required to maintain the transcriptionally repressive state of homeotic genes throughout development. PcG proteins are not required to initiate repression, but to maintain it during later stages of development. They probably act via the methylation of histones, rendering chromatin heritably changed in its expressibility. Probably targets the Esc/E(z) complex to DNA. Necessary but not sufficient to recruit a functional PcG repressive complex that represses target genes, suggesting that the recruitment of the distinct PRC1 complex is also required to allow a subsequent repression.</text>
</comment>
<comment type="function">
    <text evidence="1">Proposed core component of the chromatin remodeling Ino80 complex which is involved in transcriptional regulation, DNA replication and probably DNA repair.</text>
</comment>
<comment type="subunit">
    <text evidence="5 6">Component of the Esc/E(z) complex, composed of Esc, E(z), Su(z)12, HDAC1/Rpd3 and Caf1-55. This complex is distinct from the PRC1 complex, which contains many other PcG proteins like Pc, Ph, Psc, Su(z)2. The two complexes however cooperate and interact together during the first 3 hours of development to establish PcG silencing. Component of the chromatin remodeling Ino80 complex. Interacts with Sfmbt to form a pho-repressive complex (PhoRC).</text>
</comment>
<comment type="interaction">
    <interactant intactId="EBI-125201">
        <id>Q8ST83</id>
    </interactant>
    <interactant intactId="EBI-3414232">
        <id>Q9VDY1</id>
        <label>Ino80</label>
    </interactant>
    <organismsDiffer>false</organismsDiffer>
    <experiments>4</experiments>
</comment>
<comment type="interaction">
    <interactant intactId="EBI-125201">
        <id>Q8ST83</id>
    </interactant>
    <interactant intactId="EBI-117801">
        <id>Q9VK33</id>
        <label>Sfmbt</label>
    </interactant>
    <organismsDiffer>false</organismsDiffer>
    <experiments>8</experiments>
</comment>
<comment type="subcellular location">
    <subcellularLocation>
        <location evidence="6">Nucleus</location>
    </subcellularLocation>
</comment>
<comment type="developmental stage">
    <text>Maternally and zygotically expressed.</text>
</comment>
<gene>
    <name type="primary">pho</name>
    <name type="ORF">CG17743</name>
</gene>